<evidence type="ECO:0000255" key="1">
    <source>
        <dbReference type="HAMAP-Rule" id="MF_01172"/>
    </source>
</evidence>
<evidence type="ECO:0000305" key="2"/>
<comment type="function">
    <text evidence="1">Catalyzes the hydrolysis of N(2)-succinylarginine into N(2)-succinylornithine, ammonia and CO(2).</text>
</comment>
<comment type="catalytic activity">
    <reaction evidence="1">
        <text>N(2)-succinyl-L-arginine + 2 H2O + 2 H(+) = N(2)-succinyl-L-ornithine + 2 NH4(+) + CO2</text>
        <dbReference type="Rhea" id="RHEA:19533"/>
        <dbReference type="ChEBI" id="CHEBI:15377"/>
        <dbReference type="ChEBI" id="CHEBI:15378"/>
        <dbReference type="ChEBI" id="CHEBI:16526"/>
        <dbReference type="ChEBI" id="CHEBI:28938"/>
        <dbReference type="ChEBI" id="CHEBI:58241"/>
        <dbReference type="ChEBI" id="CHEBI:58514"/>
        <dbReference type="EC" id="3.5.3.23"/>
    </reaction>
</comment>
<comment type="pathway">
    <text evidence="1">Amino-acid degradation; L-arginine degradation via AST pathway; L-glutamate and succinate from L-arginine: step 2/5.</text>
</comment>
<comment type="subunit">
    <text evidence="1">Homodimer.</text>
</comment>
<comment type="similarity">
    <text evidence="1">Belongs to the succinylarginine dihydrolase family.</text>
</comment>
<keyword id="KW-0056">Arginine metabolism</keyword>
<keyword id="KW-0378">Hydrolase</keyword>
<keyword id="KW-1185">Reference proteome</keyword>
<proteinExistence type="inferred from homology"/>
<dbReference type="EC" id="3.5.3.23" evidence="1"/>
<dbReference type="EMBL" id="AF088896">
    <property type="protein sequence ID" value="AAD21533.1"/>
    <property type="molecule type" value="Genomic_DNA"/>
</dbReference>
<dbReference type="EMBL" id="AF124757">
    <property type="protein sequence ID" value="AAD29641.1"/>
    <property type="molecule type" value="Genomic_DNA"/>
</dbReference>
<dbReference type="EMBL" id="AE008692">
    <property type="protein sequence ID" value="AAV89796.1"/>
    <property type="molecule type" value="Genomic_DNA"/>
</dbReference>
<dbReference type="RefSeq" id="WP_011240996.1">
    <property type="nucleotide sequence ID" value="NZ_CP035711.1"/>
</dbReference>
<dbReference type="SMR" id="Q5NNB4"/>
<dbReference type="STRING" id="264203.ZMO1172"/>
<dbReference type="KEGG" id="zmo:ZMO1172"/>
<dbReference type="eggNOG" id="COG3724">
    <property type="taxonomic scope" value="Bacteria"/>
</dbReference>
<dbReference type="HOGENOM" id="CLU_053835_0_0_5"/>
<dbReference type="UniPathway" id="UPA00185">
    <property type="reaction ID" value="UER00280"/>
</dbReference>
<dbReference type="Proteomes" id="UP000001173">
    <property type="component" value="Chromosome"/>
</dbReference>
<dbReference type="GO" id="GO:0009015">
    <property type="term" value="F:N-succinylarginine dihydrolase activity"/>
    <property type="evidence" value="ECO:0007669"/>
    <property type="project" value="UniProtKB-UniRule"/>
</dbReference>
<dbReference type="GO" id="GO:0019544">
    <property type="term" value="P:arginine catabolic process to glutamate"/>
    <property type="evidence" value="ECO:0007669"/>
    <property type="project" value="UniProtKB-UniRule"/>
</dbReference>
<dbReference type="GO" id="GO:0019545">
    <property type="term" value="P:arginine catabolic process to succinate"/>
    <property type="evidence" value="ECO:0007669"/>
    <property type="project" value="UniProtKB-UniRule"/>
</dbReference>
<dbReference type="Gene3D" id="3.75.10.20">
    <property type="entry name" value="Succinylarginine dihydrolase"/>
    <property type="match status" value="1"/>
</dbReference>
<dbReference type="HAMAP" id="MF_01172">
    <property type="entry name" value="AstB"/>
    <property type="match status" value="1"/>
</dbReference>
<dbReference type="InterPro" id="IPR037031">
    <property type="entry name" value="AstB_sf"/>
</dbReference>
<dbReference type="InterPro" id="IPR007079">
    <property type="entry name" value="SuccinylArg_d-Hdrlase_AstB"/>
</dbReference>
<dbReference type="NCBIfam" id="NF009789">
    <property type="entry name" value="PRK13281.1"/>
    <property type="match status" value="1"/>
</dbReference>
<dbReference type="PANTHER" id="PTHR30420">
    <property type="entry name" value="N-SUCCINYLARGININE DIHYDROLASE"/>
    <property type="match status" value="1"/>
</dbReference>
<dbReference type="PANTHER" id="PTHR30420:SF2">
    <property type="entry name" value="N-SUCCINYLARGININE DIHYDROLASE"/>
    <property type="match status" value="1"/>
</dbReference>
<dbReference type="Pfam" id="PF04996">
    <property type="entry name" value="AstB"/>
    <property type="match status" value="1"/>
</dbReference>
<dbReference type="SUPFAM" id="SSF55909">
    <property type="entry name" value="Pentein"/>
    <property type="match status" value="1"/>
</dbReference>
<sequence length="424" mass="47270">MIVSEVNFDGLIGPTHNYAGLSRGNVASALHAGQPSYPRQAALQGLEKMKHLMDMGLTQGVFLPPLRPVTHLLHHLGYKGDDKTILKQAAKDDRLLFNNLCSASSMWAANAATVISEFDSHDGRVHFITANLATMLHRHLEAQTTYAQLNQIFSNSCFFAMHHPLPCGQHFSDEGAANHMRITSAHGRTGINIFVYGEKNDIYPARQKLRASQAVARLGEVKPDLAWFIPQKKEAIAKGAFHNDVVAVANEYVLLAHAEAFEDQGEWIKRIAEKIDGFIPIIIDNITLEQAVKSYLFNSQIVTLKDRTMALILPQEVKSDPAVWETVNRIISGNNPIKKAVVVDVRESMANGGGPACLRLRVPLSKAALEAVDQRFILTPKRWEKLYQLVENFWPEKITPDDLVLPELWKTAVRAHWALTSWLG</sequence>
<accession>Q5NNB4</accession>
<accession>Q9X3V5</accession>
<accession>Q9X5D4</accession>
<reference key="1">
    <citation type="submission" date="1998-08" db="EMBL/GenBank/DDBJ databases">
        <title>Sequence analysis of 42C11 fosmid clone of Zymomonas mobilis ZM4.</title>
        <authorList>
            <person name="Lee H.J."/>
            <person name="Kang H.S."/>
        </authorList>
    </citation>
    <scope>NUCLEOTIDE SEQUENCE [GENOMIC DNA]</scope>
    <source>
        <strain>ATCC 31821 / ZM4 / CP4</strain>
    </source>
</reference>
<reference key="2">
    <citation type="submission" date="1999-01" db="EMBL/GenBank/DDBJ databases">
        <title>Sequence analysis of 43D2 fosmid clone of Zymomonas mobilis ZM4.</title>
        <authorList>
            <person name="Lee H.J."/>
            <person name="Kang H.S."/>
        </authorList>
    </citation>
    <scope>NUCLEOTIDE SEQUENCE [GENOMIC DNA]</scope>
    <source>
        <strain>ATCC 31821 / ZM4 / CP4</strain>
    </source>
</reference>
<reference key="3">
    <citation type="journal article" date="2005" name="Nat. Biotechnol.">
        <title>The genome sequence of the ethanologenic bacterium Zymomonas mobilis ZM4.</title>
        <authorList>
            <person name="Seo J.-S."/>
            <person name="Chong H."/>
            <person name="Park H.S."/>
            <person name="Yoon K.-O."/>
            <person name="Jung C."/>
            <person name="Kim J.J."/>
            <person name="Hong J.H."/>
            <person name="Kim H."/>
            <person name="Kim J.-H."/>
            <person name="Kil J.-I."/>
            <person name="Park C.J."/>
            <person name="Oh H.-M."/>
            <person name="Lee J.-S."/>
            <person name="Jin S.-J."/>
            <person name="Um H.-W."/>
            <person name="Lee H.-J."/>
            <person name="Oh S.-J."/>
            <person name="Kim J.Y."/>
            <person name="Kang H.L."/>
            <person name="Lee S.Y."/>
            <person name="Lee K.J."/>
            <person name="Kang H.S."/>
        </authorList>
    </citation>
    <scope>NUCLEOTIDE SEQUENCE [LARGE SCALE GENOMIC DNA]</scope>
    <source>
        <strain>ATCC 31821 / ZM4 / CP4</strain>
    </source>
</reference>
<name>ASTB_ZYMMO</name>
<gene>
    <name evidence="1" type="primary">astB</name>
    <name type="ordered locus">ZMO1172</name>
</gene>
<feature type="chain" id="PRO_0000262385" description="N-succinylarginine dihydrolase">
    <location>
        <begin position="1"/>
        <end position="424"/>
    </location>
</feature>
<feature type="active site" evidence="1">
    <location>
        <position position="174"/>
    </location>
</feature>
<feature type="active site" evidence="1">
    <location>
        <position position="242"/>
    </location>
</feature>
<feature type="active site" description="Nucleophile" evidence="1">
    <location>
        <position position="357"/>
    </location>
</feature>
<feature type="binding site" evidence="1">
    <location>
        <begin position="19"/>
        <end position="28"/>
    </location>
    <ligand>
        <name>substrate</name>
    </ligand>
</feature>
<feature type="binding site" evidence="1">
    <location>
        <position position="110"/>
    </location>
    <ligand>
        <name>substrate</name>
    </ligand>
</feature>
<feature type="binding site" evidence="1">
    <location>
        <begin position="137"/>
        <end position="138"/>
    </location>
    <ligand>
        <name>substrate</name>
    </ligand>
</feature>
<feature type="binding site" evidence="1">
    <location>
        <position position="206"/>
    </location>
    <ligand>
        <name>substrate</name>
    </ligand>
</feature>
<feature type="binding site" evidence="1">
    <location>
        <position position="244"/>
    </location>
    <ligand>
        <name>substrate</name>
    </ligand>
</feature>
<feature type="binding site" evidence="1">
    <location>
        <position position="351"/>
    </location>
    <ligand>
        <name>substrate</name>
    </ligand>
</feature>
<feature type="sequence conflict" description="In Ref. 1; AAD21533." evidence="2" ref="1">
    <original>KDDRLL</original>
    <variation>RMIGCY</variation>
    <location>
        <begin position="91"/>
        <end position="96"/>
    </location>
</feature>
<feature type="sequence conflict" description="In Ref. 1; AAD21533 and 2; AAD29641." evidence="2" ref="1 2">
    <original>I</original>
    <variation>M</variation>
    <location>
        <position position="152"/>
    </location>
</feature>
<feature type="sequence conflict" description="In Ref. 2; AAD29641." evidence="2" ref="2">
    <original>E</original>
    <variation>D</variation>
    <location>
        <position position="198"/>
    </location>
</feature>
<feature type="sequence conflict" description="In Ref. 1; AAD21533." evidence="2" ref="1">
    <original>R</original>
    <variation>K</variation>
    <location>
        <position position="206"/>
    </location>
</feature>
<feature type="sequence conflict" description="In Ref. 2; AAD29641." evidence="2" ref="2">
    <original>K</original>
    <variation>I</variation>
    <location>
        <position position="339"/>
    </location>
</feature>
<feature type="sequence conflict" description="In Ref. 2; AAD29641." evidence="2" ref="2">
    <original>K</original>
    <variation>N</variation>
    <location>
        <position position="366"/>
    </location>
</feature>
<feature type="sequence conflict" description="In Ref. 2; AAD29641." evidence="2" ref="2">
    <original>K</original>
    <variation>M</variation>
    <location>
        <position position="385"/>
    </location>
</feature>
<feature type="sequence conflict" description="In Ref. 2; AAD29641." evidence="2" ref="2">
    <original>E</original>
    <variation>D</variation>
    <location>
        <position position="396"/>
    </location>
</feature>
<feature type="sequence conflict" description="In Ref. 2; AAD29641." evidence="2" ref="2">
    <original>E</original>
    <variation>D</variation>
    <location>
        <position position="407"/>
    </location>
</feature>
<organism>
    <name type="scientific">Zymomonas mobilis subsp. mobilis (strain ATCC 31821 / ZM4 / CP4)</name>
    <dbReference type="NCBI Taxonomy" id="264203"/>
    <lineage>
        <taxon>Bacteria</taxon>
        <taxon>Pseudomonadati</taxon>
        <taxon>Pseudomonadota</taxon>
        <taxon>Alphaproteobacteria</taxon>
        <taxon>Sphingomonadales</taxon>
        <taxon>Zymomonadaceae</taxon>
        <taxon>Zymomonas</taxon>
    </lineage>
</organism>
<protein>
    <recommendedName>
        <fullName evidence="1">N-succinylarginine dihydrolase</fullName>
        <ecNumber evidence="1">3.5.3.23</ecNumber>
    </recommendedName>
</protein>